<comment type="function">
    <text evidence="1">Catalyzes the reversible cyclization of carbamoyl aspartate to dihydroorotate.</text>
</comment>
<comment type="catalytic activity">
    <reaction evidence="1">
        <text>(S)-dihydroorotate + H2O = N-carbamoyl-L-aspartate + H(+)</text>
        <dbReference type="Rhea" id="RHEA:24296"/>
        <dbReference type="ChEBI" id="CHEBI:15377"/>
        <dbReference type="ChEBI" id="CHEBI:15378"/>
        <dbReference type="ChEBI" id="CHEBI:30864"/>
        <dbReference type="ChEBI" id="CHEBI:32814"/>
        <dbReference type="EC" id="3.5.2.3"/>
    </reaction>
</comment>
<comment type="cofactor">
    <cofactor evidence="1">
        <name>Zn(2+)</name>
        <dbReference type="ChEBI" id="CHEBI:29105"/>
    </cofactor>
    <text evidence="1">Binds 2 Zn(2+) ions per subunit.</text>
</comment>
<comment type="pathway">
    <text evidence="1">Pyrimidine metabolism; UMP biosynthesis via de novo pathway; (S)-dihydroorotate from bicarbonate: step 3/3.</text>
</comment>
<comment type="subunit">
    <text evidence="1">Homodimer.</text>
</comment>
<comment type="similarity">
    <text evidence="1">Belongs to the metallo-dependent hydrolases superfamily. DHOase family. Class II DHOase subfamily.</text>
</comment>
<evidence type="ECO:0000255" key="1">
    <source>
        <dbReference type="HAMAP-Rule" id="MF_00219"/>
    </source>
</evidence>
<feature type="chain" id="PRO_1000024027" description="Dihydroorotase">
    <location>
        <begin position="1"/>
        <end position="346"/>
    </location>
</feature>
<feature type="active site" evidence="1">
    <location>
        <position position="248"/>
    </location>
</feature>
<feature type="binding site" evidence="1">
    <location>
        <position position="14"/>
    </location>
    <ligand>
        <name>Zn(2+)</name>
        <dbReference type="ChEBI" id="CHEBI:29105"/>
        <label>1</label>
    </ligand>
</feature>
<feature type="binding site" evidence="1">
    <location>
        <begin position="16"/>
        <end position="18"/>
    </location>
    <ligand>
        <name>substrate</name>
    </ligand>
</feature>
<feature type="binding site" evidence="1">
    <location>
        <position position="16"/>
    </location>
    <ligand>
        <name>Zn(2+)</name>
        <dbReference type="ChEBI" id="CHEBI:29105"/>
        <label>1</label>
    </ligand>
</feature>
<feature type="binding site" evidence="1">
    <location>
        <position position="42"/>
    </location>
    <ligand>
        <name>substrate</name>
    </ligand>
</feature>
<feature type="binding site" description="via carbamate group" evidence="1">
    <location>
        <position position="100"/>
    </location>
    <ligand>
        <name>Zn(2+)</name>
        <dbReference type="ChEBI" id="CHEBI:29105"/>
        <label>1</label>
    </ligand>
</feature>
<feature type="binding site" description="via carbamate group" evidence="1">
    <location>
        <position position="100"/>
    </location>
    <ligand>
        <name>Zn(2+)</name>
        <dbReference type="ChEBI" id="CHEBI:29105"/>
        <label>2</label>
    </ligand>
</feature>
<feature type="binding site" evidence="1">
    <location>
        <position position="137"/>
    </location>
    <ligand>
        <name>substrate</name>
    </ligand>
</feature>
<feature type="binding site" evidence="1">
    <location>
        <position position="137"/>
    </location>
    <ligand>
        <name>Zn(2+)</name>
        <dbReference type="ChEBI" id="CHEBI:29105"/>
        <label>2</label>
    </ligand>
</feature>
<feature type="binding site" evidence="1">
    <location>
        <position position="175"/>
    </location>
    <ligand>
        <name>Zn(2+)</name>
        <dbReference type="ChEBI" id="CHEBI:29105"/>
        <label>2</label>
    </ligand>
</feature>
<feature type="binding site" evidence="1">
    <location>
        <position position="220"/>
    </location>
    <ligand>
        <name>substrate</name>
    </ligand>
</feature>
<feature type="binding site" evidence="1">
    <location>
        <position position="248"/>
    </location>
    <ligand>
        <name>Zn(2+)</name>
        <dbReference type="ChEBI" id="CHEBI:29105"/>
        <label>1</label>
    </ligand>
</feature>
<feature type="binding site" evidence="1">
    <location>
        <position position="252"/>
    </location>
    <ligand>
        <name>substrate</name>
    </ligand>
</feature>
<feature type="binding site" evidence="1">
    <location>
        <position position="264"/>
    </location>
    <ligand>
        <name>substrate</name>
    </ligand>
</feature>
<feature type="modified residue" description="N6-carboxylysine" evidence="1">
    <location>
        <position position="100"/>
    </location>
</feature>
<keyword id="KW-0378">Hydrolase</keyword>
<keyword id="KW-0479">Metal-binding</keyword>
<keyword id="KW-0665">Pyrimidine biosynthesis</keyword>
<keyword id="KW-1185">Reference proteome</keyword>
<keyword id="KW-0862">Zinc</keyword>
<gene>
    <name evidence="1" type="primary">pyrC</name>
    <name type="ordered locus">Saro_0935</name>
</gene>
<proteinExistence type="inferred from homology"/>
<name>PYRC_NOVAD</name>
<reference key="1">
    <citation type="submission" date="2006-01" db="EMBL/GenBank/DDBJ databases">
        <title>Complete sequence of Novosphingobium aromaticivorans DSM 12444.</title>
        <authorList>
            <consortium name="US DOE Joint Genome Institute"/>
            <person name="Copeland A."/>
            <person name="Lucas S."/>
            <person name="Lapidus A."/>
            <person name="Barry K."/>
            <person name="Detter J.C."/>
            <person name="Glavina T."/>
            <person name="Hammon N."/>
            <person name="Israni S."/>
            <person name="Pitluck S."/>
            <person name="Chain P."/>
            <person name="Malfatti S."/>
            <person name="Shin M."/>
            <person name="Vergez L."/>
            <person name="Schmutz J."/>
            <person name="Larimer F."/>
            <person name="Land M."/>
            <person name="Kyrpides N."/>
            <person name="Ivanova N."/>
            <person name="Fredrickson J."/>
            <person name="Balkwill D."/>
            <person name="Romine M.F."/>
            <person name="Richardson P."/>
        </authorList>
    </citation>
    <scope>NUCLEOTIDE SEQUENCE [LARGE SCALE GENOMIC DNA]</scope>
    <source>
        <strain>ATCC 700278 / DSM 12444 / CCUG 56034 / CIP 105152 / NBRC 16084 / F199</strain>
    </source>
</reference>
<dbReference type="EC" id="3.5.2.3" evidence="1"/>
<dbReference type="EMBL" id="CP000248">
    <property type="protein sequence ID" value="ABD25380.1"/>
    <property type="molecule type" value="Genomic_DNA"/>
</dbReference>
<dbReference type="RefSeq" id="WP_011444594.1">
    <property type="nucleotide sequence ID" value="NC_007794.1"/>
</dbReference>
<dbReference type="SMR" id="Q2G9U3"/>
<dbReference type="STRING" id="279238.Saro_0935"/>
<dbReference type="KEGG" id="nar:Saro_0935"/>
<dbReference type="eggNOG" id="COG0418">
    <property type="taxonomic scope" value="Bacteria"/>
</dbReference>
<dbReference type="HOGENOM" id="CLU_041558_1_0_5"/>
<dbReference type="UniPathway" id="UPA00070">
    <property type="reaction ID" value="UER00117"/>
</dbReference>
<dbReference type="Proteomes" id="UP000009134">
    <property type="component" value="Chromosome"/>
</dbReference>
<dbReference type="GO" id="GO:0005829">
    <property type="term" value="C:cytosol"/>
    <property type="evidence" value="ECO:0007669"/>
    <property type="project" value="TreeGrafter"/>
</dbReference>
<dbReference type="GO" id="GO:0004151">
    <property type="term" value="F:dihydroorotase activity"/>
    <property type="evidence" value="ECO:0007669"/>
    <property type="project" value="UniProtKB-UniRule"/>
</dbReference>
<dbReference type="GO" id="GO:0008270">
    <property type="term" value="F:zinc ion binding"/>
    <property type="evidence" value="ECO:0007669"/>
    <property type="project" value="UniProtKB-UniRule"/>
</dbReference>
<dbReference type="GO" id="GO:0006207">
    <property type="term" value="P:'de novo' pyrimidine nucleobase biosynthetic process"/>
    <property type="evidence" value="ECO:0007669"/>
    <property type="project" value="TreeGrafter"/>
</dbReference>
<dbReference type="GO" id="GO:0044205">
    <property type="term" value="P:'de novo' UMP biosynthetic process"/>
    <property type="evidence" value="ECO:0007669"/>
    <property type="project" value="UniProtKB-UniRule"/>
</dbReference>
<dbReference type="CDD" id="cd01294">
    <property type="entry name" value="DHOase"/>
    <property type="match status" value="1"/>
</dbReference>
<dbReference type="FunFam" id="3.20.20.140:FF:000006">
    <property type="entry name" value="Dihydroorotase"/>
    <property type="match status" value="1"/>
</dbReference>
<dbReference type="Gene3D" id="3.20.20.140">
    <property type="entry name" value="Metal-dependent hydrolases"/>
    <property type="match status" value="1"/>
</dbReference>
<dbReference type="HAMAP" id="MF_00219">
    <property type="entry name" value="PyrC_classII"/>
    <property type="match status" value="1"/>
</dbReference>
<dbReference type="InterPro" id="IPR006680">
    <property type="entry name" value="Amidohydro-rel"/>
</dbReference>
<dbReference type="InterPro" id="IPR004721">
    <property type="entry name" value="DHOdimr"/>
</dbReference>
<dbReference type="InterPro" id="IPR002195">
    <property type="entry name" value="Dihydroorotase_CS"/>
</dbReference>
<dbReference type="InterPro" id="IPR032466">
    <property type="entry name" value="Metal_Hydrolase"/>
</dbReference>
<dbReference type="NCBIfam" id="TIGR00856">
    <property type="entry name" value="pyrC_dimer"/>
    <property type="match status" value="1"/>
</dbReference>
<dbReference type="PANTHER" id="PTHR43137">
    <property type="entry name" value="DIHYDROOROTASE"/>
    <property type="match status" value="1"/>
</dbReference>
<dbReference type="PANTHER" id="PTHR43137:SF1">
    <property type="entry name" value="DIHYDROOROTASE"/>
    <property type="match status" value="1"/>
</dbReference>
<dbReference type="Pfam" id="PF01979">
    <property type="entry name" value="Amidohydro_1"/>
    <property type="match status" value="1"/>
</dbReference>
<dbReference type="PIRSF" id="PIRSF001237">
    <property type="entry name" value="DHOdimr"/>
    <property type="match status" value="1"/>
</dbReference>
<dbReference type="SUPFAM" id="SSF51556">
    <property type="entry name" value="Metallo-dependent hydrolases"/>
    <property type="match status" value="1"/>
</dbReference>
<dbReference type="PROSITE" id="PS00483">
    <property type="entry name" value="DIHYDROOROTASE_2"/>
    <property type="match status" value="1"/>
</dbReference>
<protein>
    <recommendedName>
        <fullName evidence="1">Dihydroorotase</fullName>
        <shortName evidence="1">DHOase</shortName>
        <ecNumber evidence="1">3.5.2.3</ecNumber>
    </recommendedName>
</protein>
<sequence>MTETLTIRRPDDWHVHLRDRDVLRGVVPYTARQFARAIVMPNLSPPMTDVAGVAAYRDRILAALPQGSAFTPLMTLYLTDSTDIEEVARGFAEGVFVAAKLYPAHATTGSAHGVTDIRNIYPVLEKMQEIGMPLLIHGEVTDSHVDIFDREAVFIERTLTRLVADMPALRIVFEHITTEEAAQFVEGAGDSIAATITPQHLHINRNAMLVGGIRPHAFCLPVAKREKHRLALRKLATSGFSRVFLGTDTAPHAKHLKEAACGCAGIFNAPFALESYVTVFDEEGALDRFEAFASLNGPAFYRMPVNEDRIVLERAPIEVPEVIDCNGTAIVPFHAGETLGWRIAAA</sequence>
<accession>Q2G9U3</accession>
<organism>
    <name type="scientific">Novosphingobium aromaticivorans (strain ATCC 700278 / DSM 12444 / CCUG 56034 / CIP 105152 / NBRC 16084 / F199)</name>
    <dbReference type="NCBI Taxonomy" id="279238"/>
    <lineage>
        <taxon>Bacteria</taxon>
        <taxon>Pseudomonadati</taxon>
        <taxon>Pseudomonadota</taxon>
        <taxon>Alphaproteobacteria</taxon>
        <taxon>Sphingomonadales</taxon>
        <taxon>Sphingomonadaceae</taxon>
        <taxon>Novosphingobium</taxon>
    </lineage>
</organism>